<sequence>MARYIGATCRLCRREGMKLFLKGDRCYTDKCAFARRSYAPGQHGQGRKKLSNYGVQLREKQKARRIYGILEAQFRKYYEKAETMRGITGENLLKLLEMRLDNVVYKLGFGSSRAEARQLVTHGHFLVNGKKVDIISYQVSAGDVISVREKSRGTEKFKTFAENPKTLPAWLEGNIENFEGKVIAEPTRADIDVPVNETLIVELYSK</sequence>
<name>RS4A_CLONN</name>
<reference key="1">
    <citation type="journal article" date="2006" name="Nat. Biotechnol.">
        <title>The genome and transcriptomes of the anti-tumor agent Clostridium novyi-NT.</title>
        <authorList>
            <person name="Bettegowda C."/>
            <person name="Huang X."/>
            <person name="Lin J."/>
            <person name="Cheong I."/>
            <person name="Kohli M."/>
            <person name="Szabo S.A."/>
            <person name="Zhang X."/>
            <person name="Diaz L.A. Jr."/>
            <person name="Velculescu V.E."/>
            <person name="Parmigiani G."/>
            <person name="Kinzler K.W."/>
            <person name="Vogelstein B."/>
            <person name="Zhou S."/>
        </authorList>
    </citation>
    <scope>NUCLEOTIDE SEQUENCE [LARGE SCALE GENOMIC DNA]</scope>
    <source>
        <strain>NT</strain>
    </source>
</reference>
<organism>
    <name type="scientific">Clostridium novyi (strain NT)</name>
    <dbReference type="NCBI Taxonomy" id="386415"/>
    <lineage>
        <taxon>Bacteria</taxon>
        <taxon>Bacillati</taxon>
        <taxon>Bacillota</taxon>
        <taxon>Clostridia</taxon>
        <taxon>Eubacteriales</taxon>
        <taxon>Clostridiaceae</taxon>
        <taxon>Clostridium</taxon>
    </lineage>
</organism>
<evidence type="ECO:0000255" key="1">
    <source>
        <dbReference type="HAMAP-Rule" id="MF_01306"/>
    </source>
</evidence>
<evidence type="ECO:0000305" key="2"/>
<protein>
    <recommendedName>
        <fullName evidence="1">Small ribosomal subunit protein uS4A</fullName>
    </recommendedName>
    <alternativeName>
        <fullName evidence="2">30S ribosomal protein S4 1</fullName>
    </alternativeName>
</protein>
<feature type="chain" id="PRO_0000293262" description="Small ribosomal subunit protein uS4A">
    <location>
        <begin position="1"/>
        <end position="206"/>
    </location>
</feature>
<feature type="domain" description="S4 RNA-binding" evidence="1">
    <location>
        <begin position="98"/>
        <end position="164"/>
    </location>
</feature>
<proteinExistence type="inferred from homology"/>
<comment type="function">
    <text evidence="1">One of the primary rRNA binding proteins, it binds directly to 16S rRNA where it nucleates assembly of the body of the 30S subunit.</text>
</comment>
<comment type="function">
    <text evidence="1">With S5 and S12 plays an important role in translational accuracy.</text>
</comment>
<comment type="subunit">
    <text evidence="1">Part of the 30S ribosomal subunit. Contacts protein S5. The interaction surface between S4 and S5 is involved in control of translational fidelity.</text>
</comment>
<comment type="similarity">
    <text evidence="1">Belongs to the universal ribosomal protein uS4 family.</text>
</comment>
<gene>
    <name evidence="1" type="primary">rpsD1</name>
    <name type="ordered locus">NT01CX_1143</name>
</gene>
<dbReference type="EMBL" id="CP000382">
    <property type="protein sequence ID" value="ABK62008.1"/>
    <property type="molecule type" value="Genomic_DNA"/>
</dbReference>
<dbReference type="SMR" id="A0PXX4"/>
<dbReference type="STRING" id="386415.NT01CX_1143"/>
<dbReference type="KEGG" id="cno:NT01CX_1143"/>
<dbReference type="eggNOG" id="COG0522">
    <property type="taxonomic scope" value="Bacteria"/>
</dbReference>
<dbReference type="HOGENOM" id="CLU_092403_0_2_9"/>
<dbReference type="Proteomes" id="UP000008220">
    <property type="component" value="Chromosome"/>
</dbReference>
<dbReference type="GO" id="GO:0015935">
    <property type="term" value="C:small ribosomal subunit"/>
    <property type="evidence" value="ECO:0007669"/>
    <property type="project" value="InterPro"/>
</dbReference>
<dbReference type="GO" id="GO:0019843">
    <property type="term" value="F:rRNA binding"/>
    <property type="evidence" value="ECO:0007669"/>
    <property type="project" value="UniProtKB-UniRule"/>
</dbReference>
<dbReference type="GO" id="GO:0003735">
    <property type="term" value="F:structural constituent of ribosome"/>
    <property type="evidence" value="ECO:0007669"/>
    <property type="project" value="InterPro"/>
</dbReference>
<dbReference type="GO" id="GO:0042274">
    <property type="term" value="P:ribosomal small subunit biogenesis"/>
    <property type="evidence" value="ECO:0007669"/>
    <property type="project" value="TreeGrafter"/>
</dbReference>
<dbReference type="GO" id="GO:0006412">
    <property type="term" value="P:translation"/>
    <property type="evidence" value="ECO:0007669"/>
    <property type="project" value="UniProtKB-UniRule"/>
</dbReference>
<dbReference type="CDD" id="cd00165">
    <property type="entry name" value="S4"/>
    <property type="match status" value="1"/>
</dbReference>
<dbReference type="FunFam" id="1.10.1050.10:FF:000001">
    <property type="entry name" value="30S ribosomal protein S4"/>
    <property type="match status" value="1"/>
</dbReference>
<dbReference type="FunFam" id="3.10.290.10:FF:000001">
    <property type="entry name" value="30S ribosomal protein S4"/>
    <property type="match status" value="1"/>
</dbReference>
<dbReference type="Gene3D" id="1.10.1050.10">
    <property type="entry name" value="Ribosomal Protein S4 Delta 41, Chain A, domain 1"/>
    <property type="match status" value="1"/>
</dbReference>
<dbReference type="Gene3D" id="3.10.290.10">
    <property type="entry name" value="RNA-binding S4 domain"/>
    <property type="match status" value="1"/>
</dbReference>
<dbReference type="HAMAP" id="MF_01306_B">
    <property type="entry name" value="Ribosomal_uS4_B"/>
    <property type="match status" value="1"/>
</dbReference>
<dbReference type="InterPro" id="IPR022801">
    <property type="entry name" value="Ribosomal_uS4"/>
</dbReference>
<dbReference type="InterPro" id="IPR005709">
    <property type="entry name" value="Ribosomal_uS4_bac-type"/>
</dbReference>
<dbReference type="InterPro" id="IPR018079">
    <property type="entry name" value="Ribosomal_uS4_CS"/>
</dbReference>
<dbReference type="InterPro" id="IPR001912">
    <property type="entry name" value="Ribosomal_uS4_N"/>
</dbReference>
<dbReference type="InterPro" id="IPR002942">
    <property type="entry name" value="S4_RNA-bd"/>
</dbReference>
<dbReference type="InterPro" id="IPR036986">
    <property type="entry name" value="S4_RNA-bd_sf"/>
</dbReference>
<dbReference type="NCBIfam" id="NF003717">
    <property type="entry name" value="PRK05327.1"/>
    <property type="match status" value="1"/>
</dbReference>
<dbReference type="NCBIfam" id="TIGR01017">
    <property type="entry name" value="rpsD_bact"/>
    <property type="match status" value="1"/>
</dbReference>
<dbReference type="PANTHER" id="PTHR11831">
    <property type="entry name" value="30S 40S RIBOSOMAL PROTEIN"/>
    <property type="match status" value="1"/>
</dbReference>
<dbReference type="PANTHER" id="PTHR11831:SF4">
    <property type="entry name" value="SMALL RIBOSOMAL SUBUNIT PROTEIN US4M"/>
    <property type="match status" value="1"/>
</dbReference>
<dbReference type="Pfam" id="PF00163">
    <property type="entry name" value="Ribosomal_S4"/>
    <property type="match status" value="1"/>
</dbReference>
<dbReference type="Pfam" id="PF01479">
    <property type="entry name" value="S4"/>
    <property type="match status" value="1"/>
</dbReference>
<dbReference type="SMART" id="SM01390">
    <property type="entry name" value="Ribosomal_S4"/>
    <property type="match status" value="1"/>
</dbReference>
<dbReference type="SMART" id="SM00363">
    <property type="entry name" value="S4"/>
    <property type="match status" value="1"/>
</dbReference>
<dbReference type="SUPFAM" id="SSF55174">
    <property type="entry name" value="Alpha-L RNA-binding motif"/>
    <property type="match status" value="1"/>
</dbReference>
<dbReference type="PROSITE" id="PS00632">
    <property type="entry name" value="RIBOSOMAL_S4"/>
    <property type="match status" value="1"/>
</dbReference>
<dbReference type="PROSITE" id="PS50889">
    <property type="entry name" value="S4"/>
    <property type="match status" value="1"/>
</dbReference>
<accession>A0PXX4</accession>
<keyword id="KW-1185">Reference proteome</keyword>
<keyword id="KW-0687">Ribonucleoprotein</keyword>
<keyword id="KW-0689">Ribosomal protein</keyword>
<keyword id="KW-0694">RNA-binding</keyword>
<keyword id="KW-0699">rRNA-binding</keyword>